<keyword id="KW-0007">Acetylation</keyword>
<keyword id="KW-0963">Cytoplasm</keyword>
<keyword id="KW-0597">Phosphoprotein</keyword>
<keyword id="KW-1185">Reference proteome</keyword>
<keyword id="KW-0833">Ubl conjugation pathway</keyword>
<organism>
    <name type="scientific">Pongo abelii</name>
    <name type="common">Sumatran orangutan</name>
    <name type="synonym">Pongo pygmaeus abelii</name>
    <dbReference type="NCBI Taxonomy" id="9601"/>
    <lineage>
        <taxon>Eukaryota</taxon>
        <taxon>Metazoa</taxon>
        <taxon>Chordata</taxon>
        <taxon>Craniata</taxon>
        <taxon>Vertebrata</taxon>
        <taxon>Euteleostomi</taxon>
        <taxon>Mammalia</taxon>
        <taxon>Eutheria</taxon>
        <taxon>Euarchontoglires</taxon>
        <taxon>Primates</taxon>
        <taxon>Haplorrhini</taxon>
        <taxon>Catarrhini</taxon>
        <taxon>Hominidae</taxon>
        <taxon>Pongo</taxon>
    </lineage>
</organism>
<protein>
    <recommendedName>
        <fullName>F-box only protein 22</fullName>
    </recommendedName>
</protein>
<gene>
    <name type="primary">FBXO22</name>
</gene>
<evidence type="ECO:0000250" key="1"/>
<evidence type="ECO:0000250" key="2">
    <source>
        <dbReference type="UniProtKB" id="Q8NEZ5"/>
    </source>
</evidence>
<name>FBX22_PONAB</name>
<reference key="1">
    <citation type="submission" date="2004-11" db="EMBL/GenBank/DDBJ databases">
        <authorList>
            <consortium name="The German cDNA consortium"/>
        </authorList>
    </citation>
    <scope>NUCLEOTIDE SEQUENCE [LARGE SCALE MRNA]</scope>
    <source>
        <tissue>Kidney</tissue>
    </source>
</reference>
<proteinExistence type="evidence at transcript level"/>
<accession>Q5RE08</accession>
<comment type="function">
    <text evidence="1">Substrate-recognition component of the SCF (SKP1-CUL1-F-box protein)-type E3 ubiquitin ligase complex. Promotes the proteasome-dependent degradation of key sarcomeric proteins, such as alpha-actinin (ACTN2) and filamin-C (FLNC), essential for maintenance of normal contractile function (By similarity).</text>
</comment>
<comment type="subunit">
    <text evidence="1">Directly interacts with SKP1 and CUL1.</text>
</comment>
<comment type="subcellular location">
    <subcellularLocation>
        <location evidence="1">Cytoplasm</location>
        <location evidence="1">Myofibril</location>
        <location evidence="1">Sarcomere</location>
        <location evidence="1">Z line</location>
    </subcellularLocation>
</comment>
<sequence length="403" mass="44632">MESVGCCGDCRGSSVDPRSTFVLSNLAEVVERVLTFLPAKALLRVACVCRLWRECVRRVLRTHRSVTWISAGLAEASHLERHCLVRVVAEELENVRILPHTVLYMADSETFISLEECRGHKRARKRTSMETALALEKLFPKQCQVLGIVTPGIVVTPMGSGSNRPQEIEIGESGFALLFPQIEGIKIQPFHFIKDPKNLTLERHQLTEVGLLDNPELRVVLVFGYNCCKVGASNYLQQVVSTFSDMNIILAGGQVDNLSSLTSEKNPLDIDASGVVGLSFSGHRIQSATVLLNEDVSDEKTAEAAMQRLRAANIPEQNTIGFMFACVGRGFQYYRAKGNVEADAFRKFFPSVPLFGFFGNGEIGCDRIVTGNFILRKCNEVKDDDLFHSYTTIMALIHLGSSK</sequence>
<dbReference type="EMBL" id="CR857731">
    <property type="protein sequence ID" value="CAH89999.1"/>
    <property type="molecule type" value="mRNA"/>
</dbReference>
<dbReference type="RefSeq" id="NP_001127222.1">
    <property type="nucleotide sequence ID" value="NM_001133750.2"/>
</dbReference>
<dbReference type="SMR" id="Q5RE08"/>
<dbReference type="FunCoup" id="Q5RE08">
    <property type="interactions" value="1367"/>
</dbReference>
<dbReference type="STRING" id="9601.ENSPPYP00000007567"/>
<dbReference type="GeneID" id="100174277"/>
<dbReference type="KEGG" id="pon:100174277"/>
<dbReference type="CTD" id="26263"/>
<dbReference type="eggNOG" id="ENOG502QSZ2">
    <property type="taxonomic scope" value="Eukaryota"/>
</dbReference>
<dbReference type="InParanoid" id="Q5RE08"/>
<dbReference type="OrthoDB" id="509497at2759"/>
<dbReference type="Proteomes" id="UP000001595">
    <property type="component" value="Unplaced"/>
</dbReference>
<dbReference type="GO" id="GO:0030018">
    <property type="term" value="C:Z disc"/>
    <property type="evidence" value="ECO:0007669"/>
    <property type="project" value="UniProtKB-SubCell"/>
</dbReference>
<dbReference type="GO" id="GO:0032436">
    <property type="term" value="P:positive regulation of proteasomal ubiquitin-dependent protein catabolic process"/>
    <property type="evidence" value="ECO:0007669"/>
    <property type="project" value="TreeGrafter"/>
</dbReference>
<dbReference type="GO" id="GO:0000209">
    <property type="term" value="P:protein polyubiquitination"/>
    <property type="evidence" value="ECO:0007669"/>
    <property type="project" value="TreeGrafter"/>
</dbReference>
<dbReference type="GO" id="GO:0048742">
    <property type="term" value="P:regulation of skeletal muscle fiber development"/>
    <property type="evidence" value="ECO:0007669"/>
    <property type="project" value="TreeGrafter"/>
</dbReference>
<dbReference type="CDD" id="cd22097">
    <property type="entry name" value="F-box_FBXO22"/>
    <property type="match status" value="1"/>
</dbReference>
<dbReference type="Gene3D" id="1.20.1280.50">
    <property type="match status" value="1"/>
</dbReference>
<dbReference type="InterPro" id="IPR036047">
    <property type="entry name" value="F-box-like_dom_sf"/>
</dbReference>
<dbReference type="InterPro" id="IPR001810">
    <property type="entry name" value="F-box_dom"/>
</dbReference>
<dbReference type="InterPro" id="IPR019494">
    <property type="entry name" value="FIST_C"/>
</dbReference>
<dbReference type="PANTHER" id="PTHR14939">
    <property type="entry name" value="F-BOX ONLY PROTEIN 22"/>
    <property type="match status" value="1"/>
</dbReference>
<dbReference type="PANTHER" id="PTHR14939:SF5">
    <property type="entry name" value="F-BOX ONLY PROTEIN 22"/>
    <property type="match status" value="1"/>
</dbReference>
<dbReference type="Pfam" id="PF00646">
    <property type="entry name" value="F-box"/>
    <property type="match status" value="1"/>
</dbReference>
<dbReference type="Pfam" id="PF10442">
    <property type="entry name" value="FIST_C"/>
    <property type="match status" value="1"/>
</dbReference>
<dbReference type="SMART" id="SM01204">
    <property type="entry name" value="FIST_C"/>
    <property type="match status" value="1"/>
</dbReference>
<dbReference type="SUPFAM" id="SSF81383">
    <property type="entry name" value="F-box domain"/>
    <property type="match status" value="1"/>
</dbReference>
<feature type="chain" id="PRO_0000119908" description="F-box only protein 22">
    <location>
        <begin position="1"/>
        <end position="403"/>
    </location>
</feature>
<feature type="domain" description="F-box">
    <location>
        <begin position="19"/>
        <end position="71"/>
    </location>
</feature>
<feature type="modified residue" description="N-acetylmethionine" evidence="2">
    <location>
        <position position="1"/>
    </location>
</feature>
<feature type="modified residue" description="Phosphoserine" evidence="2">
    <location>
        <position position="128"/>
    </location>
</feature>
<feature type="modified residue" description="N6-acetyllysine" evidence="2">
    <location>
        <position position="194"/>
    </location>
</feature>